<name>HIS3_NEIMA</name>
<reference key="1">
    <citation type="journal article" date="2000" name="Nature">
        <title>Complete DNA sequence of a serogroup A strain of Neisseria meningitidis Z2491.</title>
        <authorList>
            <person name="Parkhill J."/>
            <person name="Achtman M."/>
            <person name="James K.D."/>
            <person name="Bentley S.D."/>
            <person name="Churcher C.M."/>
            <person name="Klee S.R."/>
            <person name="Morelli G."/>
            <person name="Basham D."/>
            <person name="Brown D."/>
            <person name="Chillingworth T."/>
            <person name="Davies R.M."/>
            <person name="Davis P."/>
            <person name="Devlin K."/>
            <person name="Feltwell T."/>
            <person name="Hamlin N."/>
            <person name="Holroyd S."/>
            <person name="Jagels K."/>
            <person name="Leather S."/>
            <person name="Moule S."/>
            <person name="Mungall K.L."/>
            <person name="Quail M.A."/>
            <person name="Rajandream M.A."/>
            <person name="Rutherford K.M."/>
            <person name="Simmonds M."/>
            <person name="Skelton J."/>
            <person name="Whitehead S."/>
            <person name="Spratt B.G."/>
            <person name="Barrell B.G."/>
        </authorList>
    </citation>
    <scope>NUCLEOTIDE SEQUENCE [LARGE SCALE GENOMIC DNA]</scope>
    <source>
        <strain>DSM 15465 / Z2491</strain>
    </source>
</reference>
<dbReference type="EC" id="3.5.4.19" evidence="1"/>
<dbReference type="EMBL" id="AL157959">
    <property type="protein sequence ID" value="CAM08075.1"/>
    <property type="molecule type" value="Genomic_DNA"/>
</dbReference>
<dbReference type="PIR" id="A81929">
    <property type="entry name" value="A81929"/>
</dbReference>
<dbReference type="RefSeq" id="WP_002246043.1">
    <property type="nucleotide sequence ID" value="NC_003116.1"/>
</dbReference>
<dbReference type="SMR" id="Q9JVH6"/>
<dbReference type="EnsemblBacteria" id="CAM08075">
    <property type="protein sequence ID" value="CAM08075"/>
    <property type="gene ID" value="NMA0837"/>
</dbReference>
<dbReference type="KEGG" id="nma:NMA0837"/>
<dbReference type="HOGENOM" id="CLU_048577_5_0_4"/>
<dbReference type="UniPathway" id="UPA00031">
    <property type="reaction ID" value="UER00008"/>
</dbReference>
<dbReference type="Proteomes" id="UP000000626">
    <property type="component" value="Chromosome"/>
</dbReference>
<dbReference type="GO" id="GO:0005737">
    <property type="term" value="C:cytoplasm"/>
    <property type="evidence" value="ECO:0007669"/>
    <property type="project" value="UniProtKB-SubCell"/>
</dbReference>
<dbReference type="GO" id="GO:0000287">
    <property type="term" value="F:magnesium ion binding"/>
    <property type="evidence" value="ECO:0007669"/>
    <property type="project" value="UniProtKB-UniRule"/>
</dbReference>
<dbReference type="GO" id="GO:0004635">
    <property type="term" value="F:phosphoribosyl-AMP cyclohydrolase activity"/>
    <property type="evidence" value="ECO:0007669"/>
    <property type="project" value="UniProtKB-UniRule"/>
</dbReference>
<dbReference type="GO" id="GO:0008270">
    <property type="term" value="F:zinc ion binding"/>
    <property type="evidence" value="ECO:0007669"/>
    <property type="project" value="UniProtKB-UniRule"/>
</dbReference>
<dbReference type="GO" id="GO:0000105">
    <property type="term" value="P:L-histidine biosynthetic process"/>
    <property type="evidence" value="ECO:0007669"/>
    <property type="project" value="UniProtKB-UniRule"/>
</dbReference>
<dbReference type="FunFam" id="3.10.20.810:FF:000001">
    <property type="entry name" value="Histidine biosynthesis bifunctional protein HisIE"/>
    <property type="match status" value="1"/>
</dbReference>
<dbReference type="Gene3D" id="3.10.20.810">
    <property type="entry name" value="Phosphoribosyl-AMP cyclohydrolase"/>
    <property type="match status" value="1"/>
</dbReference>
<dbReference type="HAMAP" id="MF_01021">
    <property type="entry name" value="HisI"/>
    <property type="match status" value="1"/>
</dbReference>
<dbReference type="InterPro" id="IPR026660">
    <property type="entry name" value="PRA-CH"/>
</dbReference>
<dbReference type="InterPro" id="IPR002496">
    <property type="entry name" value="PRib_AMP_CycHydrolase_dom"/>
</dbReference>
<dbReference type="InterPro" id="IPR038019">
    <property type="entry name" value="PRib_AMP_CycHydrolase_sf"/>
</dbReference>
<dbReference type="NCBIfam" id="NF000768">
    <property type="entry name" value="PRK00051.1"/>
    <property type="match status" value="1"/>
</dbReference>
<dbReference type="PANTHER" id="PTHR42945">
    <property type="entry name" value="HISTIDINE BIOSYNTHESIS BIFUNCTIONAL PROTEIN"/>
    <property type="match status" value="1"/>
</dbReference>
<dbReference type="PANTHER" id="PTHR42945:SF1">
    <property type="entry name" value="HISTIDINE BIOSYNTHESIS BIFUNCTIONAL PROTEIN HIS7"/>
    <property type="match status" value="1"/>
</dbReference>
<dbReference type="Pfam" id="PF01502">
    <property type="entry name" value="PRA-CH"/>
    <property type="match status" value="1"/>
</dbReference>
<dbReference type="SUPFAM" id="SSF141734">
    <property type="entry name" value="HisI-like"/>
    <property type="match status" value="1"/>
</dbReference>
<keyword id="KW-0028">Amino-acid biosynthesis</keyword>
<keyword id="KW-0963">Cytoplasm</keyword>
<keyword id="KW-0368">Histidine biosynthesis</keyword>
<keyword id="KW-0378">Hydrolase</keyword>
<keyword id="KW-0460">Magnesium</keyword>
<keyword id="KW-0479">Metal-binding</keyword>
<keyword id="KW-0862">Zinc</keyword>
<sequence length="131" mass="14815">MDKNLLEAVKFDEKGLVCAIAQDAETKRILMVAWMNAEALQKTVETGFAHYYSRSRQKQWMKGEESGHTQKVRELRLDCDGDAIVMLIAQNGGIACHTGRESCFYKVWRGGAWETADAVLKDEKEIYGSTH</sequence>
<gene>
    <name evidence="1" type="primary">hisI</name>
    <name type="ordered locus">NMA0837</name>
</gene>
<accession>Q9JVH6</accession>
<accession>A1IQP1</accession>
<feature type="chain" id="PRO_0000136488" description="Phosphoribosyl-AMP cyclohydrolase">
    <location>
        <begin position="1"/>
        <end position="131"/>
    </location>
</feature>
<feature type="binding site" evidence="1">
    <location>
        <position position="78"/>
    </location>
    <ligand>
        <name>Mg(2+)</name>
        <dbReference type="ChEBI" id="CHEBI:18420"/>
    </ligand>
</feature>
<feature type="binding site" evidence="1">
    <location>
        <position position="79"/>
    </location>
    <ligand>
        <name>Zn(2+)</name>
        <dbReference type="ChEBI" id="CHEBI:29105"/>
        <note>ligand shared between dimeric partners</note>
    </ligand>
</feature>
<feature type="binding site" evidence="1">
    <location>
        <position position="80"/>
    </location>
    <ligand>
        <name>Mg(2+)</name>
        <dbReference type="ChEBI" id="CHEBI:18420"/>
    </ligand>
</feature>
<feature type="binding site" evidence="1">
    <location>
        <position position="82"/>
    </location>
    <ligand>
        <name>Mg(2+)</name>
        <dbReference type="ChEBI" id="CHEBI:18420"/>
    </ligand>
</feature>
<feature type="binding site" evidence="1">
    <location>
        <position position="96"/>
    </location>
    <ligand>
        <name>Zn(2+)</name>
        <dbReference type="ChEBI" id="CHEBI:29105"/>
        <note>ligand shared between dimeric partners</note>
    </ligand>
</feature>
<feature type="binding site" evidence="1">
    <location>
        <position position="103"/>
    </location>
    <ligand>
        <name>Zn(2+)</name>
        <dbReference type="ChEBI" id="CHEBI:29105"/>
        <note>ligand shared between dimeric partners</note>
    </ligand>
</feature>
<organism>
    <name type="scientific">Neisseria meningitidis serogroup A / serotype 4A (strain DSM 15465 / Z2491)</name>
    <dbReference type="NCBI Taxonomy" id="122587"/>
    <lineage>
        <taxon>Bacteria</taxon>
        <taxon>Pseudomonadati</taxon>
        <taxon>Pseudomonadota</taxon>
        <taxon>Betaproteobacteria</taxon>
        <taxon>Neisseriales</taxon>
        <taxon>Neisseriaceae</taxon>
        <taxon>Neisseria</taxon>
    </lineage>
</organism>
<comment type="function">
    <text evidence="1">Catalyzes the hydrolysis of the adenine ring of phosphoribosyl-AMP.</text>
</comment>
<comment type="catalytic activity">
    <reaction evidence="1">
        <text>1-(5-phospho-beta-D-ribosyl)-5'-AMP + H2O = 1-(5-phospho-beta-D-ribosyl)-5-[(5-phospho-beta-D-ribosylamino)methylideneamino]imidazole-4-carboxamide</text>
        <dbReference type="Rhea" id="RHEA:20049"/>
        <dbReference type="ChEBI" id="CHEBI:15377"/>
        <dbReference type="ChEBI" id="CHEBI:58435"/>
        <dbReference type="ChEBI" id="CHEBI:59457"/>
        <dbReference type="EC" id="3.5.4.19"/>
    </reaction>
</comment>
<comment type="cofactor">
    <cofactor evidence="1">
        <name>Mg(2+)</name>
        <dbReference type="ChEBI" id="CHEBI:18420"/>
    </cofactor>
    <text evidence="1">Binds 1 Mg(2+) ion per subunit.</text>
</comment>
<comment type="cofactor">
    <cofactor evidence="1">
        <name>Zn(2+)</name>
        <dbReference type="ChEBI" id="CHEBI:29105"/>
    </cofactor>
    <text evidence="1">Binds 1 zinc ion per subunit.</text>
</comment>
<comment type="pathway">
    <text evidence="1">Amino-acid biosynthesis; L-histidine biosynthesis; L-histidine from 5-phospho-alpha-D-ribose 1-diphosphate: step 3/9.</text>
</comment>
<comment type="subunit">
    <text evidence="1">Homodimer.</text>
</comment>
<comment type="subcellular location">
    <subcellularLocation>
        <location evidence="1">Cytoplasm</location>
    </subcellularLocation>
</comment>
<comment type="similarity">
    <text evidence="1">Belongs to the PRA-CH family.</text>
</comment>
<proteinExistence type="inferred from homology"/>
<evidence type="ECO:0000255" key="1">
    <source>
        <dbReference type="HAMAP-Rule" id="MF_01021"/>
    </source>
</evidence>
<protein>
    <recommendedName>
        <fullName evidence="1">Phosphoribosyl-AMP cyclohydrolase</fullName>
        <shortName evidence="1">PRA-CH</shortName>
        <ecNumber evidence="1">3.5.4.19</ecNumber>
    </recommendedName>
</protein>